<name>PSB30_PICP2</name>
<comment type="function">
    <text evidence="1">A core subunit of photosystem II (PSII), probably helps stabilize the reaction center.</text>
</comment>
<comment type="subunit">
    <text evidence="1">PSII is composed of 1 copy each of membrane proteins PsbA, PsbB, PsbC, PsbD, PsbE, PsbF, PsbH, PsbI, PsbJ, PsbK, PsbL, PsbM, PsbT, PsbX, PsbY, PsbZ, Psb30/Ycf12, peripheral proteins PsbO, CyanoQ (PsbQ), PsbU, PsbV and a large number of cofactors. It forms dimeric complexes.</text>
</comment>
<comment type="subcellular location">
    <subcellularLocation>
        <location evidence="1">Cellular thylakoid membrane</location>
        <topology evidence="1">Single-pass membrane protein</topology>
    </subcellularLocation>
</comment>
<comment type="similarity">
    <text evidence="1">Belongs to the Psb30/Ycf12 family.</text>
</comment>
<accession>B1XJC4</accession>
<evidence type="ECO:0000255" key="1">
    <source>
        <dbReference type="HAMAP-Rule" id="MF_01329"/>
    </source>
</evidence>
<keyword id="KW-0472">Membrane</keyword>
<keyword id="KW-0602">Photosynthesis</keyword>
<keyword id="KW-0604">Photosystem II</keyword>
<keyword id="KW-1185">Reference proteome</keyword>
<keyword id="KW-0793">Thylakoid</keyword>
<keyword id="KW-0812">Transmembrane</keyword>
<keyword id="KW-1133">Transmembrane helix</keyword>
<proteinExistence type="inferred from homology"/>
<reference key="1">
    <citation type="submission" date="2008-02" db="EMBL/GenBank/DDBJ databases">
        <title>Complete sequence of Synechococcus sp. PCC 7002.</title>
        <authorList>
            <person name="Li T."/>
            <person name="Zhao J."/>
            <person name="Zhao C."/>
            <person name="Liu Z."/>
            <person name="Zhao F."/>
            <person name="Marquardt J."/>
            <person name="Nomura C.T."/>
            <person name="Persson S."/>
            <person name="Detter J.C."/>
            <person name="Richardson P.M."/>
            <person name="Lanz C."/>
            <person name="Schuster S.C."/>
            <person name="Wang J."/>
            <person name="Li S."/>
            <person name="Huang X."/>
            <person name="Cai T."/>
            <person name="Yu Z."/>
            <person name="Luo J."/>
            <person name="Zhao J."/>
            <person name="Bryant D.A."/>
        </authorList>
    </citation>
    <scope>NUCLEOTIDE SEQUENCE [LARGE SCALE GENOMIC DNA]</scope>
    <source>
        <strain>ATCC 27264 / PCC 7002 / PR-6</strain>
    </source>
</reference>
<feature type="chain" id="PRO_0000342346" description="Photosystem II reaction center protein Psb30">
    <location>
        <begin position="1"/>
        <end position="43"/>
    </location>
</feature>
<feature type="transmembrane region" description="Helical" evidence="1">
    <location>
        <begin position="15"/>
        <end position="35"/>
    </location>
</feature>
<dbReference type="EMBL" id="CP000951">
    <property type="protein sequence ID" value="ACA98984.1"/>
    <property type="molecule type" value="Genomic_DNA"/>
</dbReference>
<dbReference type="RefSeq" id="WP_012306608.1">
    <property type="nucleotide sequence ID" value="NZ_JAHHPU010000001.1"/>
</dbReference>
<dbReference type="SMR" id="B1XJC4"/>
<dbReference type="STRING" id="32049.SYNPCC7002_A0981"/>
<dbReference type="KEGG" id="syp:SYNPCC7002_A0981"/>
<dbReference type="eggNOG" id="ENOG5033A5B">
    <property type="taxonomic scope" value="Bacteria"/>
</dbReference>
<dbReference type="HOGENOM" id="CLU_196761_0_0_3"/>
<dbReference type="Proteomes" id="UP000001688">
    <property type="component" value="Chromosome"/>
</dbReference>
<dbReference type="GO" id="GO:0009523">
    <property type="term" value="C:photosystem II"/>
    <property type="evidence" value="ECO:0007669"/>
    <property type="project" value="UniProtKB-KW"/>
</dbReference>
<dbReference type="GO" id="GO:0031676">
    <property type="term" value="C:plasma membrane-derived thylakoid membrane"/>
    <property type="evidence" value="ECO:0007669"/>
    <property type="project" value="UniProtKB-SubCell"/>
</dbReference>
<dbReference type="GO" id="GO:0015979">
    <property type="term" value="P:photosynthesis"/>
    <property type="evidence" value="ECO:0007669"/>
    <property type="project" value="UniProtKB-KW"/>
</dbReference>
<dbReference type="HAMAP" id="MF_01329">
    <property type="entry name" value="PSII_Psb30_Ycf12"/>
    <property type="match status" value="1"/>
</dbReference>
<dbReference type="InterPro" id="IPR010284">
    <property type="entry name" value="PSII_Ycf12_core-subunit"/>
</dbReference>
<dbReference type="NCBIfam" id="NF010239">
    <property type="entry name" value="PRK13686.1"/>
    <property type="match status" value="1"/>
</dbReference>
<dbReference type="Pfam" id="PF05969">
    <property type="entry name" value="PSII_Ycf12"/>
    <property type="match status" value="1"/>
</dbReference>
<organism>
    <name type="scientific">Picosynechococcus sp. (strain ATCC 27264 / PCC 7002 / PR-6)</name>
    <name type="common">Agmenellum quadruplicatum</name>
    <dbReference type="NCBI Taxonomy" id="32049"/>
    <lineage>
        <taxon>Bacteria</taxon>
        <taxon>Bacillati</taxon>
        <taxon>Cyanobacteriota</taxon>
        <taxon>Cyanophyceae</taxon>
        <taxon>Oscillatoriophycideae</taxon>
        <taxon>Chroococcales</taxon>
        <taxon>Geminocystaceae</taxon>
        <taxon>Picosynechococcus</taxon>
    </lineage>
</organism>
<gene>
    <name evidence="1" type="primary">psb30</name>
    <name evidence="1" type="synonym">ycf12</name>
    <name type="ordered locus">SYNPCC7002_A0981</name>
</gene>
<protein>
    <recommendedName>
        <fullName evidence="1">Photosystem II reaction center protein Psb30</fullName>
    </recommendedName>
    <alternativeName>
        <fullName evidence="1">Photosystem II reaction center protein Ycf12</fullName>
    </alternativeName>
</protein>
<sequence>MDFITGFFGSLNFEVIFQLTFVSLILISGPVVIFLLAIRGGDM</sequence>